<proteinExistence type="inferred from homology"/>
<organism>
    <name type="scientific">Brucella melitensis biotype 1 (strain ATCC 23456 / CCUG 17765 / NCTC 10094 / 16M)</name>
    <dbReference type="NCBI Taxonomy" id="224914"/>
    <lineage>
        <taxon>Bacteria</taxon>
        <taxon>Pseudomonadati</taxon>
        <taxon>Pseudomonadota</taxon>
        <taxon>Alphaproteobacteria</taxon>
        <taxon>Hyphomicrobiales</taxon>
        <taxon>Brucellaceae</taxon>
        <taxon>Brucella/Ochrobactrum group</taxon>
        <taxon>Brucella</taxon>
    </lineage>
</organism>
<accession>Q8YFM4</accession>
<gene>
    <name type="ordered locus">BMEI1496</name>
</gene>
<evidence type="ECO:0000250" key="1"/>
<evidence type="ECO:0000255" key="2">
    <source>
        <dbReference type="PROSITE-ProRule" id="PRU01024"/>
    </source>
</evidence>
<protein>
    <recommendedName>
        <fullName>Uncharacterized RNA methyltransferase BMEI1496</fullName>
        <ecNumber>2.1.1.-</ecNumber>
    </recommendedName>
</protein>
<dbReference type="EC" id="2.1.1.-"/>
<dbReference type="EMBL" id="AE008917">
    <property type="protein sequence ID" value="AAL52677.1"/>
    <property type="molecule type" value="Genomic_DNA"/>
</dbReference>
<dbReference type="PIR" id="AB3439">
    <property type="entry name" value="AB3439"/>
</dbReference>
<dbReference type="RefSeq" id="WP_004683080.1">
    <property type="nucleotide sequence ID" value="NC_003317.1"/>
</dbReference>
<dbReference type="SMR" id="Q8YFM4"/>
<dbReference type="GeneID" id="29594350"/>
<dbReference type="KEGG" id="bme:BMEI1496"/>
<dbReference type="KEGG" id="bmel:DK63_1994"/>
<dbReference type="PATRIC" id="fig|224914.52.peg.2095"/>
<dbReference type="eggNOG" id="COG2265">
    <property type="taxonomic scope" value="Bacteria"/>
</dbReference>
<dbReference type="PhylomeDB" id="Q8YFM4"/>
<dbReference type="Proteomes" id="UP000000419">
    <property type="component" value="Chromosome I"/>
</dbReference>
<dbReference type="GO" id="GO:0051539">
    <property type="term" value="F:4 iron, 4 sulfur cluster binding"/>
    <property type="evidence" value="ECO:0007669"/>
    <property type="project" value="UniProtKB-KW"/>
</dbReference>
<dbReference type="GO" id="GO:0046872">
    <property type="term" value="F:metal ion binding"/>
    <property type="evidence" value="ECO:0007669"/>
    <property type="project" value="UniProtKB-KW"/>
</dbReference>
<dbReference type="GO" id="GO:0070041">
    <property type="term" value="F:rRNA (uridine-C5-)-methyltransferase activity"/>
    <property type="evidence" value="ECO:0007669"/>
    <property type="project" value="TreeGrafter"/>
</dbReference>
<dbReference type="GO" id="GO:0070475">
    <property type="term" value="P:rRNA base methylation"/>
    <property type="evidence" value="ECO:0007669"/>
    <property type="project" value="TreeGrafter"/>
</dbReference>
<dbReference type="Gene3D" id="2.40.50.1070">
    <property type="match status" value="1"/>
</dbReference>
<dbReference type="Gene3D" id="2.40.50.140">
    <property type="entry name" value="Nucleic acid-binding proteins"/>
    <property type="match status" value="1"/>
</dbReference>
<dbReference type="Gene3D" id="3.40.50.150">
    <property type="entry name" value="Vaccinia Virus protein VP39"/>
    <property type="match status" value="1"/>
</dbReference>
<dbReference type="InterPro" id="IPR030390">
    <property type="entry name" value="MeTrfase_TrmA_AS"/>
</dbReference>
<dbReference type="InterPro" id="IPR012340">
    <property type="entry name" value="NA-bd_OB-fold"/>
</dbReference>
<dbReference type="InterPro" id="IPR029063">
    <property type="entry name" value="SAM-dependent_MTases_sf"/>
</dbReference>
<dbReference type="InterPro" id="IPR010280">
    <property type="entry name" value="U5_MeTrfase_fam"/>
</dbReference>
<dbReference type="PANTHER" id="PTHR11061:SF49">
    <property type="entry name" value="23S RRNA (URACIL(1939)-C(5))-METHYLTRANSFERASE RLMD"/>
    <property type="match status" value="1"/>
</dbReference>
<dbReference type="PANTHER" id="PTHR11061">
    <property type="entry name" value="RNA M5U METHYLTRANSFERASE"/>
    <property type="match status" value="1"/>
</dbReference>
<dbReference type="Pfam" id="PF05958">
    <property type="entry name" value="tRNA_U5-meth_tr"/>
    <property type="match status" value="1"/>
</dbReference>
<dbReference type="SUPFAM" id="SSF50249">
    <property type="entry name" value="Nucleic acid-binding proteins"/>
    <property type="match status" value="1"/>
</dbReference>
<dbReference type="SUPFAM" id="SSF53335">
    <property type="entry name" value="S-adenosyl-L-methionine-dependent methyltransferases"/>
    <property type="match status" value="1"/>
</dbReference>
<dbReference type="PROSITE" id="PS51687">
    <property type="entry name" value="SAM_MT_RNA_M5U"/>
    <property type="match status" value="1"/>
</dbReference>
<dbReference type="PROSITE" id="PS01230">
    <property type="entry name" value="TRMA_1"/>
    <property type="match status" value="1"/>
</dbReference>
<keyword id="KW-0004">4Fe-4S</keyword>
<keyword id="KW-0408">Iron</keyword>
<keyword id="KW-0411">Iron-sulfur</keyword>
<keyword id="KW-0479">Metal-binding</keyword>
<keyword id="KW-0489">Methyltransferase</keyword>
<keyword id="KW-0949">S-adenosyl-L-methionine</keyword>
<keyword id="KW-0808">Transferase</keyword>
<comment type="similarity">
    <text evidence="2">Belongs to the class I-like SAM-binding methyltransferase superfamily. RNA M5U methyltransferase family.</text>
</comment>
<name>Y1496_BRUME</name>
<reference key="1">
    <citation type="journal article" date="2002" name="Proc. Natl. Acad. Sci. U.S.A.">
        <title>The genome sequence of the facultative intracellular pathogen Brucella melitensis.</title>
        <authorList>
            <person name="DelVecchio V.G."/>
            <person name="Kapatral V."/>
            <person name="Redkar R.J."/>
            <person name="Patra G."/>
            <person name="Mujer C."/>
            <person name="Los T."/>
            <person name="Ivanova N."/>
            <person name="Anderson I."/>
            <person name="Bhattacharyya A."/>
            <person name="Lykidis A."/>
            <person name="Reznik G."/>
            <person name="Jablonski L."/>
            <person name="Larsen N."/>
            <person name="D'Souza M."/>
            <person name="Bernal A."/>
            <person name="Mazur M."/>
            <person name="Goltsman E."/>
            <person name="Selkov E."/>
            <person name="Elzer P.H."/>
            <person name="Hagius S."/>
            <person name="O'Callaghan D."/>
            <person name="Letesson J.-J."/>
            <person name="Haselkorn R."/>
            <person name="Kyrpides N.C."/>
            <person name="Overbeek R."/>
        </authorList>
    </citation>
    <scope>NUCLEOTIDE SEQUENCE [LARGE SCALE GENOMIC DNA]</scope>
    <source>
        <strain>ATCC 23456 / CCUG 17765 / NCTC 10094 / 16M</strain>
    </source>
</reference>
<feature type="chain" id="PRO_0000161960" description="Uncharacterized RNA methyltransferase BMEI1496">
    <location>
        <begin position="1"/>
        <end position="415"/>
    </location>
</feature>
<feature type="active site" description="Nucleophile" evidence="2">
    <location>
        <position position="370"/>
    </location>
</feature>
<feature type="binding site" evidence="1">
    <location>
        <position position="66"/>
    </location>
    <ligand>
        <name>[4Fe-4S] cluster</name>
        <dbReference type="ChEBI" id="CHEBI:49883"/>
    </ligand>
</feature>
<feature type="binding site" evidence="1">
    <location>
        <position position="72"/>
    </location>
    <ligand>
        <name>[4Fe-4S] cluster</name>
        <dbReference type="ChEBI" id="CHEBI:49883"/>
    </ligand>
</feature>
<feature type="binding site" evidence="1">
    <location>
        <position position="75"/>
    </location>
    <ligand>
        <name>[4Fe-4S] cluster</name>
        <dbReference type="ChEBI" id="CHEBI:49883"/>
    </ligand>
</feature>
<feature type="binding site" evidence="1">
    <location>
        <position position="149"/>
    </location>
    <ligand>
        <name>[4Fe-4S] cluster</name>
        <dbReference type="ChEBI" id="CHEBI:49883"/>
    </ligand>
</feature>
<feature type="binding site" evidence="2">
    <location>
        <position position="249"/>
    </location>
    <ligand>
        <name>S-adenosyl-L-methionine</name>
        <dbReference type="ChEBI" id="CHEBI:59789"/>
    </ligand>
</feature>
<feature type="binding site" evidence="2">
    <location>
        <position position="276"/>
    </location>
    <ligand>
        <name>S-adenosyl-L-methionine</name>
        <dbReference type="ChEBI" id="CHEBI:59789"/>
    </ligand>
</feature>
<feature type="binding site" evidence="2">
    <location>
        <position position="296"/>
    </location>
    <ligand>
        <name>S-adenosyl-L-methionine</name>
        <dbReference type="ChEBI" id="CHEBI:59789"/>
    </ligand>
</feature>
<feature type="binding site" evidence="2">
    <location>
        <position position="344"/>
    </location>
    <ligand>
        <name>S-adenosyl-L-methionine</name>
        <dbReference type="ChEBI" id="CHEBI:59789"/>
    </ligand>
</feature>
<sequence length="415" mass="45001">MTSSKTGQITIRSIGAGGDGVANLPDGQIYVPFTLPGEVVNVARDKNRATLMALLEASPERQNPACRHFEDCGGCALQHWQDEPYRLWKRELVVGALKGRGTDVEVAPLVACNPHTRRRAVFAARKTEKGVLLGFNRHQSHEIIDIVECPVTVPEIIARLDDLREVGALLAPGSGPFKLAATLTESGLDLAASGCGKLNDEQRRALTALVIKKDFARLSHEGEIIVEPKKPLIHFGKVPVPIPPGCFLQATAEAEETMAALVLAHLGKARRVADLFCGVGTFALRIAEKSAVHAVENDAAALAALDRGVRHVQGLKPVSIERRDLFRRPLMTKELLPYNAVVFDPPRAGAEEQALELAKSKVEKVVAISCNPVTLARDLAILQKGGYRIERVTPIDQFLWSAHVEAVAVLTKGRQ</sequence>